<keyword id="KW-0067">ATP-binding</keyword>
<keyword id="KW-0418">Kinase</keyword>
<keyword id="KW-0547">Nucleotide-binding</keyword>
<keyword id="KW-0808">Transferase</keyword>
<protein>
    <recommendedName>
        <fullName>ATP-dependent kinase YFH7</fullName>
        <ecNumber>2.7.1.-</ecNumber>
    </recommendedName>
    <alternativeName>
        <fullName>Altered inheritance of mitochondria protein 12</fullName>
    </alternativeName>
</protein>
<evidence type="ECO:0000250" key="1"/>
<evidence type="ECO:0000305" key="2"/>
<dbReference type="EC" id="2.7.1.-"/>
<dbReference type="EMBL" id="AAFW02000176">
    <property type="protein sequence ID" value="EDN59156.1"/>
    <property type="molecule type" value="Genomic_DNA"/>
</dbReference>
<dbReference type="SMR" id="A7A245"/>
<dbReference type="HOGENOM" id="CLU_067202_1_0_1"/>
<dbReference type="Proteomes" id="UP000007060">
    <property type="component" value="Unassembled WGS sequence"/>
</dbReference>
<dbReference type="GO" id="GO:0005524">
    <property type="term" value="F:ATP binding"/>
    <property type="evidence" value="ECO:0007669"/>
    <property type="project" value="UniProtKB-KW"/>
</dbReference>
<dbReference type="GO" id="GO:0016301">
    <property type="term" value="F:kinase activity"/>
    <property type="evidence" value="ECO:0007669"/>
    <property type="project" value="UniProtKB-KW"/>
</dbReference>
<dbReference type="CDD" id="cd00009">
    <property type="entry name" value="AAA"/>
    <property type="match status" value="1"/>
</dbReference>
<dbReference type="FunFam" id="3.40.50.300:FF:002630">
    <property type="entry name" value="ATP-dependent kinase YFH7"/>
    <property type="match status" value="1"/>
</dbReference>
<dbReference type="Gene3D" id="3.40.50.300">
    <property type="entry name" value="P-loop containing nucleotide triphosphate hydrolases"/>
    <property type="match status" value="1"/>
</dbReference>
<dbReference type="InterPro" id="IPR027417">
    <property type="entry name" value="P-loop_NTPase"/>
</dbReference>
<dbReference type="PANTHER" id="PTHR10285">
    <property type="entry name" value="URIDINE KINASE"/>
    <property type="match status" value="1"/>
</dbReference>
<dbReference type="SUPFAM" id="SSF52540">
    <property type="entry name" value="P-loop containing nucleoside triphosphate hydrolases"/>
    <property type="match status" value="2"/>
</dbReference>
<name>YFH7_YEAS7</name>
<gene>
    <name type="primary">YFH7</name>
    <name type="synonym">AIM12</name>
    <name type="ORF">SCY_1755</name>
</gene>
<proteinExistence type="inferred from homology"/>
<accession>A7A245</accession>
<comment type="function">
    <text evidence="1">ATP-dependent kinase that could be involved in endoplasmic reticulum membrane assembly.</text>
</comment>
<comment type="similarity">
    <text evidence="2">Belongs to the YFH7 family.</text>
</comment>
<reference key="1">
    <citation type="journal article" date="2007" name="Proc. Natl. Acad. Sci. U.S.A.">
        <title>Genome sequencing and comparative analysis of Saccharomyces cerevisiae strain YJM789.</title>
        <authorList>
            <person name="Wei W."/>
            <person name="McCusker J.H."/>
            <person name="Hyman R.W."/>
            <person name="Jones T."/>
            <person name="Ning Y."/>
            <person name="Cao Z."/>
            <person name="Gu Z."/>
            <person name="Bruno D."/>
            <person name="Miranda M."/>
            <person name="Nguyen M."/>
            <person name="Wilhelmy J."/>
            <person name="Komp C."/>
            <person name="Tamse R."/>
            <person name="Wang X."/>
            <person name="Jia P."/>
            <person name="Luedi P."/>
            <person name="Oefner P.J."/>
            <person name="David L."/>
            <person name="Dietrich F.S."/>
            <person name="Li Y."/>
            <person name="Davis R.W."/>
            <person name="Steinmetz L.M."/>
        </authorList>
    </citation>
    <scope>NUCLEOTIDE SEQUENCE [LARGE SCALE GENOMIC DNA]</scope>
    <source>
        <strain>YJM789</strain>
    </source>
</reference>
<sequence length="353" mass="39930">MVDTHKLADDVLQLLDNRIEDNYRVCVILVGSPGSGKSTIAEELCQIINEKYHTFLSEHPNVIEVNDRLKPMVNLVDSLKTLQPNEVAEMIENQGLFKDHVEDVNFQPIKYSALTSNNEECTAVVARGGTANAIRIATVDNPVNVNKLAQDSINIAQIVPMDGFHLSRRCLDLFKDPQTAHKRRGSPSTFDSNNFLQLCKILAKTSLCKVSSHHKFYSTSSVFEKLSKTFSQTIPDIFVPGFNHALKDPTPDQYCISKFTRIVILEGLYLLYDQENWKKIYKTLADTGALLVYKIDIDYEATEERVAKRHLQSGLVTTIAEGREKFRSNDLLNGRDIDNHLIKVDNIVHIRND</sequence>
<organism>
    <name type="scientific">Saccharomyces cerevisiae (strain YJM789)</name>
    <name type="common">Baker's yeast</name>
    <dbReference type="NCBI Taxonomy" id="307796"/>
    <lineage>
        <taxon>Eukaryota</taxon>
        <taxon>Fungi</taxon>
        <taxon>Dikarya</taxon>
        <taxon>Ascomycota</taxon>
        <taxon>Saccharomycotina</taxon>
        <taxon>Saccharomycetes</taxon>
        <taxon>Saccharomycetales</taxon>
        <taxon>Saccharomycetaceae</taxon>
        <taxon>Saccharomyces</taxon>
    </lineage>
</organism>
<feature type="chain" id="PRO_0000404220" description="ATP-dependent kinase YFH7">
    <location>
        <begin position="1"/>
        <end position="353"/>
    </location>
</feature>
<feature type="binding site" evidence="1">
    <location>
        <begin position="31"/>
        <end position="39"/>
    </location>
    <ligand>
        <name>ATP</name>
        <dbReference type="ChEBI" id="CHEBI:30616"/>
    </ligand>
</feature>